<name>LCGA_LACLL</name>
<protein>
    <recommendedName>
        <fullName>Bacteriocin lactococcin-G subunit alpha</fullName>
    </recommendedName>
</protein>
<comment type="function">
    <text>Kills Lactococci.</text>
</comment>
<comment type="subunit">
    <text>Bacteriocin activity requires interaction of alpha and beta peptides in a molar ratio of 7:1 or 8:1 respectively.</text>
</comment>
<dbReference type="PIR" id="A44918">
    <property type="entry name" value="A44918"/>
</dbReference>
<dbReference type="PDB" id="2JPJ">
    <property type="method" value="NMR"/>
    <property type="chains" value="A=1-39"/>
</dbReference>
<dbReference type="PDB" id="2JPL">
    <property type="method" value="NMR"/>
    <property type="chains" value="A=1-39"/>
</dbReference>
<dbReference type="PDBsum" id="2JPJ"/>
<dbReference type="PDBsum" id="2JPL"/>
<dbReference type="SMR" id="P36961"/>
<dbReference type="TCDB" id="1.C.25.1.1">
    <property type="family name" value="the lactococcin g (lactococcin g) family"/>
</dbReference>
<dbReference type="EvolutionaryTrace" id="P36961"/>
<dbReference type="GO" id="GO:0042742">
    <property type="term" value="P:defense response to bacterium"/>
    <property type="evidence" value="ECO:0007669"/>
    <property type="project" value="UniProtKB-KW"/>
</dbReference>
<dbReference type="GO" id="GO:0031640">
    <property type="term" value="P:killing of cells of another organism"/>
    <property type="evidence" value="ECO:0007669"/>
    <property type="project" value="UniProtKB-KW"/>
</dbReference>
<dbReference type="InterPro" id="IPR012950">
    <property type="entry name" value="Alpha_enterocin/lactococcin"/>
</dbReference>
<dbReference type="Pfam" id="PF08129">
    <property type="entry name" value="Antimicrobial17"/>
    <property type="match status" value="1"/>
</dbReference>
<organism>
    <name type="scientific">Lactococcus lactis subsp. lactis</name>
    <name type="common">Streptococcus lactis</name>
    <dbReference type="NCBI Taxonomy" id="1360"/>
    <lineage>
        <taxon>Bacteria</taxon>
        <taxon>Bacillati</taxon>
        <taxon>Bacillota</taxon>
        <taxon>Bacilli</taxon>
        <taxon>Lactobacillales</taxon>
        <taxon>Streptococcaceae</taxon>
        <taxon>Lactococcus</taxon>
    </lineage>
</organism>
<feature type="peptide" id="PRO_0000044640" description="Bacteriocin lactococcin-G subunit alpha">
    <location>
        <begin position="1"/>
        <end position="39"/>
    </location>
</feature>
<feature type="helix" evidence="1">
    <location>
        <begin position="3"/>
        <end position="21"/>
    </location>
</feature>
<feature type="helix" evidence="1">
    <location>
        <begin position="26"/>
        <end position="34"/>
    </location>
</feature>
<feature type="helix" evidence="1">
    <location>
        <begin position="35"/>
        <end position="37"/>
    </location>
</feature>
<evidence type="ECO:0007829" key="1">
    <source>
        <dbReference type="PDB" id="2JPJ"/>
    </source>
</evidence>
<proteinExistence type="evidence at protein level"/>
<keyword id="KW-0002">3D-structure</keyword>
<keyword id="KW-0044">Antibiotic</keyword>
<keyword id="KW-0929">Antimicrobial</keyword>
<keyword id="KW-0078">Bacteriocin</keyword>
<keyword id="KW-0903">Direct protein sequencing</keyword>
<reference key="1">
    <citation type="journal article" date="1992" name="J. Bacteriol.">
        <title>A novel lactococcal bacteriocin whose activity depends on the complementary action of two peptides.</title>
        <authorList>
            <person name="Nissen-Meyer J."/>
            <person name="Holo H."/>
            <person name="Havarstein L.S."/>
            <person name="Sletten K."/>
            <person name="Nes I.F."/>
        </authorList>
    </citation>
    <scope>PROTEIN SEQUENCE</scope>
    <source>
        <strain>LMG 2081</strain>
    </source>
</reference>
<accession>P36961</accession>
<accession>Q9R5J1</accession>
<sequence>GTWDDIGQGIGRVAYWVGKAMGNMSDVNQASRINRKKKH</sequence>